<proteinExistence type="inferred from homology"/>
<feature type="propeptide" id="PRO_0000024142" description="Leader sequence" evidence="4">
    <location>
        <begin position="1"/>
        <end position="7"/>
    </location>
</feature>
<feature type="chain" id="PRO_0000024143" description="Type IV major fimbrial protein FimA">
    <location>
        <begin position="8"/>
        <end position="161"/>
    </location>
</feature>
<feature type="transmembrane region" description="Helical" evidence="3">
    <location>
        <begin position="8"/>
        <end position="28"/>
    </location>
</feature>
<feature type="modified residue" description="N-methylphenylalanine" evidence="4">
    <location>
        <position position="8"/>
    </location>
</feature>
<feature type="disulfide bond" evidence="2">
    <location>
        <begin position="63"/>
        <end position="106"/>
    </location>
</feature>
<sequence length="161" mass="16886">MKSLQKGFTLIELMIVVAIIGILAAFAIPAYNDYIARSQAAEGVSLADGLKIRIAENLQDGACKGPDADPSTGVVGNEDVGKFGKAVITDNAYNPDAKEPGDENGCQVLITYGEGTAKDKVSSLIKGKKLQLNQLVNGSYTQGDGTDLPAKFIPNAVKKSQ</sequence>
<gene>
    <name type="primary">fimA</name>
</gene>
<reference key="1">
    <citation type="journal article" date="1991" name="Mol. Microbiol.">
        <title>Gene sequences and comparison of the fimbrial subunits representative of Bacteroides nodosus serotypes A to I: class I and class II strains.</title>
        <authorList>
            <person name="Mattick J.S."/>
            <person name="Anderson B.J."/>
            <person name="Cox P.T."/>
            <person name="Dalrymple B.P."/>
            <person name="Bills M.M."/>
            <person name="Hobbs M."/>
            <person name="Egerton J.R."/>
        </authorList>
    </citation>
    <scope>NUCLEOTIDE SEQUENCE [GENOMIC DNA]</scope>
    <source>
        <strain>Serogroup I isolate VCS1636</strain>
    </source>
</reference>
<protein>
    <recommendedName>
        <fullName>Type IV major fimbrial protein FimA</fullName>
    </recommendedName>
    <alternativeName>
        <fullName>Pilin</fullName>
    </alternativeName>
    <alternativeName>
        <fullName>Serogroup I</fullName>
    </alternativeName>
</protein>
<dbReference type="EMBL" id="X52410">
    <property type="protein sequence ID" value="CAA36662.1"/>
    <property type="molecule type" value="Genomic_DNA"/>
</dbReference>
<dbReference type="PIR" id="S15265">
    <property type="entry name" value="S15265"/>
</dbReference>
<dbReference type="SMR" id="P17827"/>
<dbReference type="GO" id="GO:0016020">
    <property type="term" value="C:membrane"/>
    <property type="evidence" value="ECO:0007669"/>
    <property type="project" value="UniProtKB-SubCell"/>
</dbReference>
<dbReference type="GO" id="GO:0009289">
    <property type="term" value="C:pilus"/>
    <property type="evidence" value="ECO:0007669"/>
    <property type="project" value="UniProtKB-SubCell"/>
</dbReference>
<dbReference type="GO" id="GO:0007155">
    <property type="term" value="P:cell adhesion"/>
    <property type="evidence" value="ECO:0007669"/>
    <property type="project" value="InterPro"/>
</dbReference>
<dbReference type="Gene3D" id="3.30.700.10">
    <property type="entry name" value="Glycoprotein, Type 4 Pilin"/>
    <property type="match status" value="1"/>
</dbReference>
<dbReference type="InterPro" id="IPR012902">
    <property type="entry name" value="N_methyl_site"/>
</dbReference>
<dbReference type="InterPro" id="IPR001082">
    <property type="entry name" value="Pilin"/>
</dbReference>
<dbReference type="InterPro" id="IPR045584">
    <property type="entry name" value="Pilin-like"/>
</dbReference>
<dbReference type="NCBIfam" id="TIGR02532">
    <property type="entry name" value="IV_pilin_GFxxxE"/>
    <property type="match status" value="1"/>
</dbReference>
<dbReference type="Pfam" id="PF07963">
    <property type="entry name" value="N_methyl"/>
    <property type="match status" value="1"/>
</dbReference>
<dbReference type="Pfam" id="PF00114">
    <property type="entry name" value="Pilin"/>
    <property type="match status" value="1"/>
</dbReference>
<dbReference type="SUPFAM" id="SSF54523">
    <property type="entry name" value="Pili subunits"/>
    <property type="match status" value="1"/>
</dbReference>
<dbReference type="PROSITE" id="PS00409">
    <property type="entry name" value="PROKAR_NTER_METHYL"/>
    <property type="match status" value="1"/>
</dbReference>
<comment type="function">
    <text evidence="1">Major component of the type IV fimbriae that plays an essential role in twitching motility, natural transformation, and protease secretion.</text>
</comment>
<comment type="subunit">
    <text>The pili are polar flexible filaments of about 5.4 nanometers diameter and 2.5 micrometers average length; they consist of only a single polypeptide chain arranged in a helical configuration of five subunits per turn in the assembled pilus.</text>
</comment>
<comment type="subcellular location">
    <subcellularLocation>
        <location evidence="1">Fimbrium</location>
    </subcellularLocation>
    <subcellularLocation>
        <location evidence="3">Membrane</location>
        <topology evidence="3">Single-pass membrane protein</topology>
    </subcellularLocation>
</comment>
<comment type="similarity">
    <text evidence="5">Belongs to the N-Me-Phe pilin family.</text>
</comment>
<evidence type="ECO:0000250" key="1">
    <source>
        <dbReference type="UniProtKB" id="A5EWR9"/>
    </source>
</evidence>
<evidence type="ECO:0000250" key="2">
    <source>
        <dbReference type="UniProtKB" id="P02975"/>
    </source>
</evidence>
<evidence type="ECO:0000255" key="3"/>
<evidence type="ECO:0000255" key="4">
    <source>
        <dbReference type="PROSITE-ProRule" id="PRU01070"/>
    </source>
</evidence>
<evidence type="ECO:0000305" key="5"/>
<accession>P17827</accession>
<organism>
    <name type="scientific">Dichelobacter nodosus</name>
    <name type="common">Bacteroides nodosus</name>
    <dbReference type="NCBI Taxonomy" id="870"/>
    <lineage>
        <taxon>Bacteria</taxon>
        <taxon>Pseudomonadati</taxon>
        <taxon>Pseudomonadota</taxon>
        <taxon>Gammaproteobacteria</taxon>
        <taxon>Cardiobacteriales</taxon>
        <taxon>Cardiobacteriaceae</taxon>
        <taxon>Dichelobacter</taxon>
    </lineage>
</organism>
<name>FMAI_DICNO</name>
<keyword id="KW-1015">Disulfide bond</keyword>
<keyword id="KW-0281">Fimbrium</keyword>
<keyword id="KW-0472">Membrane</keyword>
<keyword id="KW-0488">Methylation</keyword>
<keyword id="KW-0812">Transmembrane</keyword>
<keyword id="KW-1133">Transmembrane helix</keyword>